<evidence type="ECO:0000255" key="1">
    <source>
        <dbReference type="HAMAP-Rule" id="MF_01347"/>
    </source>
</evidence>
<organism>
    <name type="scientific">Salmonella arizonae (strain ATCC BAA-731 / CDC346-86 / RSK2980)</name>
    <dbReference type="NCBI Taxonomy" id="41514"/>
    <lineage>
        <taxon>Bacteria</taxon>
        <taxon>Pseudomonadati</taxon>
        <taxon>Pseudomonadota</taxon>
        <taxon>Gammaproteobacteria</taxon>
        <taxon>Enterobacterales</taxon>
        <taxon>Enterobacteriaceae</taxon>
        <taxon>Salmonella</taxon>
    </lineage>
</organism>
<keyword id="KW-0066">ATP synthesis</keyword>
<keyword id="KW-0067">ATP-binding</keyword>
<keyword id="KW-0997">Cell inner membrane</keyword>
<keyword id="KW-1003">Cell membrane</keyword>
<keyword id="KW-0139">CF(1)</keyword>
<keyword id="KW-0375">Hydrogen ion transport</keyword>
<keyword id="KW-0406">Ion transport</keyword>
<keyword id="KW-0472">Membrane</keyword>
<keyword id="KW-0547">Nucleotide-binding</keyword>
<keyword id="KW-1185">Reference proteome</keyword>
<keyword id="KW-1278">Translocase</keyword>
<keyword id="KW-0813">Transport</keyword>
<gene>
    <name evidence="1" type="primary">atpD</name>
    <name type="ordered locus">SARI_03786</name>
</gene>
<sequence>MATGKIVQVIGAVVDVEFPQDAVPRVYDALEVQNGNEKLVLEVQQQLGGGIVRTIAMGSSDGLRRGLDVKDLEHPIEVPVGKATLGRIMNVLGEPVDMKGEIGEEERWAIHRAAPSYEELSNSQELLETGIKVIDLMCPFAKGGKVGLFGGAGVGKTVNMMELIRNIAIEHSGYSVFAGVGERTREGNDFYHEMTDSNVIDKVSLVYGQMNEPPGNRLRVALTGLTMAEKFRDEGRDVLLFVDNIYRYTLAGTEVSALLGRMPSAVGYQPTLAEEMGVLQERITSTKTGSITSVQAVYVPADDLTDPSPATTFAHLDATVVLSRQIASLGIYPAVDPLDSTSRQLDPLVVGQEHYDTARGVQSILQRYQELKDIIAILGMDELSEEDKLVVARARKIQRFLSQPFFVAEVFTGSPGKYVSLKDTIRGFKGIMEGEYDHLPEQAFYMVGSIDEAVEKAKKL</sequence>
<comment type="function">
    <text evidence="1">Produces ATP from ADP in the presence of a proton gradient across the membrane. The catalytic sites are hosted primarily by the beta subunits.</text>
</comment>
<comment type="catalytic activity">
    <reaction evidence="1">
        <text>ATP + H2O + 4 H(+)(in) = ADP + phosphate + 5 H(+)(out)</text>
        <dbReference type="Rhea" id="RHEA:57720"/>
        <dbReference type="ChEBI" id="CHEBI:15377"/>
        <dbReference type="ChEBI" id="CHEBI:15378"/>
        <dbReference type="ChEBI" id="CHEBI:30616"/>
        <dbReference type="ChEBI" id="CHEBI:43474"/>
        <dbReference type="ChEBI" id="CHEBI:456216"/>
        <dbReference type="EC" id="7.1.2.2"/>
    </reaction>
</comment>
<comment type="subunit">
    <text evidence="1">F-type ATPases have 2 components, CF(1) - the catalytic core - and CF(0) - the membrane proton channel. CF(1) has five subunits: alpha(3), beta(3), gamma(1), delta(1), epsilon(1). CF(0) has three main subunits: a(1), b(2) and c(9-12). The alpha and beta chains form an alternating ring which encloses part of the gamma chain. CF(1) is attached to CF(0) by a central stalk formed by the gamma and epsilon chains, while a peripheral stalk is formed by the delta and b chains.</text>
</comment>
<comment type="subcellular location">
    <subcellularLocation>
        <location evidence="1">Cell inner membrane</location>
        <topology evidence="1">Peripheral membrane protein</topology>
    </subcellularLocation>
</comment>
<comment type="similarity">
    <text evidence="1">Belongs to the ATPase alpha/beta chains family.</text>
</comment>
<feature type="chain" id="PRO_1000086919" description="ATP synthase subunit beta">
    <location>
        <begin position="1"/>
        <end position="460"/>
    </location>
</feature>
<feature type="binding site" evidence="1">
    <location>
        <begin position="150"/>
        <end position="157"/>
    </location>
    <ligand>
        <name>ATP</name>
        <dbReference type="ChEBI" id="CHEBI:30616"/>
    </ligand>
</feature>
<proteinExistence type="inferred from homology"/>
<accession>A9MJR9</accession>
<dbReference type="EC" id="7.1.2.2" evidence="1"/>
<dbReference type="EMBL" id="CP000880">
    <property type="protein sequence ID" value="ABX23580.1"/>
    <property type="molecule type" value="Genomic_DNA"/>
</dbReference>
<dbReference type="SMR" id="A9MJR9"/>
<dbReference type="STRING" id="41514.SARI_03786"/>
<dbReference type="KEGG" id="ses:SARI_03786"/>
<dbReference type="HOGENOM" id="CLU_022398_0_2_6"/>
<dbReference type="Proteomes" id="UP000002084">
    <property type="component" value="Chromosome"/>
</dbReference>
<dbReference type="GO" id="GO:0005886">
    <property type="term" value="C:plasma membrane"/>
    <property type="evidence" value="ECO:0007669"/>
    <property type="project" value="UniProtKB-SubCell"/>
</dbReference>
<dbReference type="GO" id="GO:0045259">
    <property type="term" value="C:proton-transporting ATP synthase complex"/>
    <property type="evidence" value="ECO:0007669"/>
    <property type="project" value="UniProtKB-KW"/>
</dbReference>
<dbReference type="GO" id="GO:0005524">
    <property type="term" value="F:ATP binding"/>
    <property type="evidence" value="ECO:0007669"/>
    <property type="project" value="UniProtKB-UniRule"/>
</dbReference>
<dbReference type="GO" id="GO:0016887">
    <property type="term" value="F:ATP hydrolysis activity"/>
    <property type="evidence" value="ECO:0007669"/>
    <property type="project" value="InterPro"/>
</dbReference>
<dbReference type="GO" id="GO:0046933">
    <property type="term" value="F:proton-transporting ATP synthase activity, rotational mechanism"/>
    <property type="evidence" value="ECO:0007669"/>
    <property type="project" value="UniProtKB-UniRule"/>
</dbReference>
<dbReference type="CDD" id="cd18110">
    <property type="entry name" value="ATP-synt_F1_beta_C"/>
    <property type="match status" value="1"/>
</dbReference>
<dbReference type="CDD" id="cd18115">
    <property type="entry name" value="ATP-synt_F1_beta_N"/>
    <property type="match status" value="1"/>
</dbReference>
<dbReference type="CDD" id="cd01133">
    <property type="entry name" value="F1-ATPase_beta_CD"/>
    <property type="match status" value="1"/>
</dbReference>
<dbReference type="FunFam" id="1.10.1140.10:FF:000001">
    <property type="entry name" value="ATP synthase subunit beta"/>
    <property type="match status" value="1"/>
</dbReference>
<dbReference type="FunFam" id="2.40.10.170:FF:000003">
    <property type="entry name" value="ATP synthase subunit beta"/>
    <property type="match status" value="1"/>
</dbReference>
<dbReference type="FunFam" id="3.40.50.300:FF:000004">
    <property type="entry name" value="ATP synthase subunit beta"/>
    <property type="match status" value="1"/>
</dbReference>
<dbReference type="Gene3D" id="2.40.10.170">
    <property type="match status" value="1"/>
</dbReference>
<dbReference type="Gene3D" id="1.10.1140.10">
    <property type="entry name" value="Bovine Mitochondrial F1-atpase, Atp Synthase Beta Chain, Chain D, domain 3"/>
    <property type="match status" value="1"/>
</dbReference>
<dbReference type="Gene3D" id="3.40.50.300">
    <property type="entry name" value="P-loop containing nucleotide triphosphate hydrolases"/>
    <property type="match status" value="1"/>
</dbReference>
<dbReference type="HAMAP" id="MF_01347">
    <property type="entry name" value="ATP_synth_beta_bact"/>
    <property type="match status" value="1"/>
</dbReference>
<dbReference type="InterPro" id="IPR003593">
    <property type="entry name" value="AAA+_ATPase"/>
</dbReference>
<dbReference type="InterPro" id="IPR055190">
    <property type="entry name" value="ATP-synt_VA_C"/>
</dbReference>
<dbReference type="InterPro" id="IPR005722">
    <property type="entry name" value="ATP_synth_F1_bsu"/>
</dbReference>
<dbReference type="InterPro" id="IPR020003">
    <property type="entry name" value="ATPase_a/bsu_AS"/>
</dbReference>
<dbReference type="InterPro" id="IPR050053">
    <property type="entry name" value="ATPase_alpha/beta_chains"/>
</dbReference>
<dbReference type="InterPro" id="IPR004100">
    <property type="entry name" value="ATPase_F1/V1/A1_a/bsu_N"/>
</dbReference>
<dbReference type="InterPro" id="IPR036121">
    <property type="entry name" value="ATPase_F1/V1/A1_a/bsu_N_sf"/>
</dbReference>
<dbReference type="InterPro" id="IPR000194">
    <property type="entry name" value="ATPase_F1/V1/A1_a/bsu_nucl-bd"/>
</dbReference>
<dbReference type="InterPro" id="IPR024034">
    <property type="entry name" value="ATPase_F1/V1_b/a_C"/>
</dbReference>
<dbReference type="InterPro" id="IPR027417">
    <property type="entry name" value="P-loop_NTPase"/>
</dbReference>
<dbReference type="NCBIfam" id="TIGR01039">
    <property type="entry name" value="atpD"/>
    <property type="match status" value="1"/>
</dbReference>
<dbReference type="PANTHER" id="PTHR15184">
    <property type="entry name" value="ATP SYNTHASE"/>
    <property type="match status" value="1"/>
</dbReference>
<dbReference type="PANTHER" id="PTHR15184:SF71">
    <property type="entry name" value="ATP SYNTHASE SUBUNIT BETA, MITOCHONDRIAL"/>
    <property type="match status" value="1"/>
</dbReference>
<dbReference type="Pfam" id="PF00006">
    <property type="entry name" value="ATP-synt_ab"/>
    <property type="match status" value="1"/>
</dbReference>
<dbReference type="Pfam" id="PF02874">
    <property type="entry name" value="ATP-synt_ab_N"/>
    <property type="match status" value="1"/>
</dbReference>
<dbReference type="Pfam" id="PF22919">
    <property type="entry name" value="ATP-synt_VA_C"/>
    <property type="match status" value="1"/>
</dbReference>
<dbReference type="SMART" id="SM00382">
    <property type="entry name" value="AAA"/>
    <property type="match status" value="1"/>
</dbReference>
<dbReference type="SUPFAM" id="SSF47917">
    <property type="entry name" value="C-terminal domain of alpha and beta subunits of F1 ATP synthase"/>
    <property type="match status" value="1"/>
</dbReference>
<dbReference type="SUPFAM" id="SSF50615">
    <property type="entry name" value="N-terminal domain of alpha and beta subunits of F1 ATP synthase"/>
    <property type="match status" value="1"/>
</dbReference>
<dbReference type="SUPFAM" id="SSF52540">
    <property type="entry name" value="P-loop containing nucleoside triphosphate hydrolases"/>
    <property type="match status" value="1"/>
</dbReference>
<dbReference type="PROSITE" id="PS00152">
    <property type="entry name" value="ATPASE_ALPHA_BETA"/>
    <property type="match status" value="1"/>
</dbReference>
<protein>
    <recommendedName>
        <fullName evidence="1">ATP synthase subunit beta</fullName>
        <ecNumber evidence="1">7.1.2.2</ecNumber>
    </recommendedName>
    <alternativeName>
        <fullName evidence="1">ATP synthase F1 sector subunit beta</fullName>
    </alternativeName>
    <alternativeName>
        <fullName evidence="1">F-ATPase subunit beta</fullName>
    </alternativeName>
</protein>
<reference key="1">
    <citation type="submission" date="2007-11" db="EMBL/GenBank/DDBJ databases">
        <authorList>
            <consortium name="The Salmonella enterica serovar Arizonae Genome Sequencing Project"/>
            <person name="McClelland M."/>
            <person name="Sanderson E.K."/>
            <person name="Porwollik S."/>
            <person name="Spieth J."/>
            <person name="Clifton W.S."/>
            <person name="Fulton R."/>
            <person name="Chunyan W."/>
            <person name="Wollam A."/>
            <person name="Shah N."/>
            <person name="Pepin K."/>
            <person name="Bhonagiri V."/>
            <person name="Nash W."/>
            <person name="Johnson M."/>
            <person name="Thiruvilangam P."/>
            <person name="Wilson R."/>
        </authorList>
    </citation>
    <scope>NUCLEOTIDE SEQUENCE [LARGE SCALE GENOMIC DNA]</scope>
    <source>
        <strain>ATCC BAA-731 / CDC346-86 / RSK2980</strain>
    </source>
</reference>
<name>ATPB_SALAR</name>